<sequence length="545" mass="63688">MSIFIGGAWPYANGSLHIGHAAALLPGDILARYYRQKGEEVLYVSGSDCNGTPISIRAKKENKSVKEIADFYHKEFKETFEKLGFTYDLYSRTDSPLHHEIVQELFLQLYEKKFLYTKKIKQLYCTFDNQFLPDRFVEGKCPNCGTHSRGDQCDNCSAILDPIDLVDKRCSICSNEPEVRETEHFYYVFSEFQNLLETYLNDAEETVRWRKNAINLTKRYLREGLPDRAVTRDLPNGIPVPIDGFRDKKIYVWFEAVAGYYTASVDWAQKLQNNITDFWNNRTKSYYVHGKDNIPFHTIIWPAILSGLEIEPLPEYIISSEYLTLENKKISTSNNWAIWLNDIIKKYDADSIRYFLTINAPEMKDANFSWREFIYSHNSELLGSYGNFINRTLKFIEKYFESEIPTKYLEGEILYNLKELYTTVGNLVESGHMKQALEEIFEYIRSANKFYDDMKPWALRESDIEKCKEVLATCVIIILNLGQMLNPFIPFSGKKIEDMFKTKLNTWNYISNLPNKLSDVSMLFDRIDLKKIDEEVLELQQTSSR</sequence>
<keyword id="KW-0030">Aminoacyl-tRNA synthetase</keyword>
<keyword id="KW-0067">ATP-binding</keyword>
<keyword id="KW-0963">Cytoplasm</keyword>
<keyword id="KW-0436">Ligase</keyword>
<keyword id="KW-0479">Metal-binding</keyword>
<keyword id="KW-0547">Nucleotide-binding</keyword>
<keyword id="KW-0648">Protein biosynthesis</keyword>
<keyword id="KW-0862">Zinc</keyword>
<name>SYM_STRPS</name>
<dbReference type="EC" id="6.1.1.10" evidence="1"/>
<dbReference type="EMBL" id="CP001033">
    <property type="protein sequence ID" value="ACB90479.1"/>
    <property type="molecule type" value="Genomic_DNA"/>
</dbReference>
<dbReference type="RefSeq" id="WP_000021543.1">
    <property type="nucleotide sequence ID" value="NC_010582.1"/>
</dbReference>
<dbReference type="SMR" id="B2IQ55"/>
<dbReference type="KEGG" id="spw:SPCG_1227"/>
<dbReference type="HOGENOM" id="CLU_009710_1_2_9"/>
<dbReference type="GO" id="GO:0005829">
    <property type="term" value="C:cytosol"/>
    <property type="evidence" value="ECO:0007669"/>
    <property type="project" value="TreeGrafter"/>
</dbReference>
<dbReference type="GO" id="GO:0005524">
    <property type="term" value="F:ATP binding"/>
    <property type="evidence" value="ECO:0007669"/>
    <property type="project" value="UniProtKB-UniRule"/>
</dbReference>
<dbReference type="GO" id="GO:0046872">
    <property type="term" value="F:metal ion binding"/>
    <property type="evidence" value="ECO:0007669"/>
    <property type="project" value="UniProtKB-KW"/>
</dbReference>
<dbReference type="GO" id="GO:0004825">
    <property type="term" value="F:methionine-tRNA ligase activity"/>
    <property type="evidence" value="ECO:0007669"/>
    <property type="project" value="UniProtKB-UniRule"/>
</dbReference>
<dbReference type="GO" id="GO:0006431">
    <property type="term" value="P:methionyl-tRNA aminoacylation"/>
    <property type="evidence" value="ECO:0007669"/>
    <property type="project" value="UniProtKB-UniRule"/>
</dbReference>
<dbReference type="CDD" id="cd07957">
    <property type="entry name" value="Anticodon_Ia_Met"/>
    <property type="match status" value="1"/>
</dbReference>
<dbReference type="CDD" id="cd00814">
    <property type="entry name" value="MetRS_core"/>
    <property type="match status" value="1"/>
</dbReference>
<dbReference type="Gene3D" id="3.40.50.620">
    <property type="entry name" value="HUPs"/>
    <property type="match status" value="1"/>
</dbReference>
<dbReference type="Gene3D" id="1.10.730.10">
    <property type="entry name" value="Isoleucyl-tRNA Synthetase, Domain 1"/>
    <property type="match status" value="1"/>
</dbReference>
<dbReference type="Gene3D" id="2.20.28.20">
    <property type="entry name" value="Methionyl-tRNA synthetase, Zn-domain"/>
    <property type="match status" value="1"/>
</dbReference>
<dbReference type="HAMAP" id="MF_00098">
    <property type="entry name" value="Met_tRNA_synth_type1"/>
    <property type="match status" value="1"/>
</dbReference>
<dbReference type="InterPro" id="IPR001412">
    <property type="entry name" value="aa-tRNA-synth_I_CS"/>
</dbReference>
<dbReference type="InterPro" id="IPR041872">
    <property type="entry name" value="Anticodon_Met"/>
</dbReference>
<dbReference type="InterPro" id="IPR023458">
    <property type="entry name" value="Met-tRNA_ligase_1"/>
</dbReference>
<dbReference type="InterPro" id="IPR014758">
    <property type="entry name" value="Met-tRNA_synth"/>
</dbReference>
<dbReference type="InterPro" id="IPR015413">
    <property type="entry name" value="Methionyl/Leucyl_tRNA_Synth"/>
</dbReference>
<dbReference type="InterPro" id="IPR033911">
    <property type="entry name" value="MetRS_core"/>
</dbReference>
<dbReference type="InterPro" id="IPR029038">
    <property type="entry name" value="MetRS_Zn"/>
</dbReference>
<dbReference type="InterPro" id="IPR014729">
    <property type="entry name" value="Rossmann-like_a/b/a_fold"/>
</dbReference>
<dbReference type="InterPro" id="IPR009080">
    <property type="entry name" value="tRNAsynth_Ia_anticodon-bd"/>
</dbReference>
<dbReference type="NCBIfam" id="TIGR00398">
    <property type="entry name" value="metG"/>
    <property type="match status" value="1"/>
</dbReference>
<dbReference type="PANTHER" id="PTHR45765">
    <property type="entry name" value="METHIONINE--TRNA LIGASE"/>
    <property type="match status" value="1"/>
</dbReference>
<dbReference type="PANTHER" id="PTHR45765:SF1">
    <property type="entry name" value="METHIONINE--TRNA LIGASE, CYTOPLASMIC"/>
    <property type="match status" value="1"/>
</dbReference>
<dbReference type="Pfam" id="PF09334">
    <property type="entry name" value="tRNA-synt_1g"/>
    <property type="match status" value="1"/>
</dbReference>
<dbReference type="PRINTS" id="PR01041">
    <property type="entry name" value="TRNASYNTHMET"/>
</dbReference>
<dbReference type="SUPFAM" id="SSF47323">
    <property type="entry name" value="Anticodon-binding domain of a subclass of class I aminoacyl-tRNA synthetases"/>
    <property type="match status" value="1"/>
</dbReference>
<dbReference type="SUPFAM" id="SSF57770">
    <property type="entry name" value="Methionyl-tRNA synthetase (MetRS), Zn-domain"/>
    <property type="match status" value="1"/>
</dbReference>
<dbReference type="SUPFAM" id="SSF52374">
    <property type="entry name" value="Nucleotidylyl transferase"/>
    <property type="match status" value="1"/>
</dbReference>
<dbReference type="PROSITE" id="PS00178">
    <property type="entry name" value="AA_TRNA_LIGASE_I"/>
    <property type="match status" value="1"/>
</dbReference>
<feature type="chain" id="PRO_1000093737" description="Methionine--tRNA ligase">
    <location>
        <begin position="1"/>
        <end position="545"/>
    </location>
</feature>
<feature type="short sequence motif" description="'HIGH' region">
    <location>
        <begin position="10"/>
        <end position="20"/>
    </location>
</feature>
<feature type="short sequence motif" description="'KMSKS' region">
    <location>
        <begin position="329"/>
        <end position="333"/>
    </location>
</feature>
<feature type="binding site" evidence="1">
    <location>
        <position position="141"/>
    </location>
    <ligand>
        <name>Zn(2+)</name>
        <dbReference type="ChEBI" id="CHEBI:29105"/>
    </ligand>
</feature>
<feature type="binding site" evidence="1">
    <location>
        <position position="144"/>
    </location>
    <ligand>
        <name>Zn(2+)</name>
        <dbReference type="ChEBI" id="CHEBI:29105"/>
    </ligand>
</feature>
<feature type="binding site" evidence="1">
    <location>
        <position position="153"/>
    </location>
    <ligand>
        <name>Zn(2+)</name>
        <dbReference type="ChEBI" id="CHEBI:29105"/>
    </ligand>
</feature>
<feature type="binding site" evidence="1">
    <location>
        <position position="156"/>
    </location>
    <ligand>
        <name>Zn(2+)</name>
        <dbReference type="ChEBI" id="CHEBI:29105"/>
    </ligand>
</feature>
<feature type="binding site" evidence="1">
    <location>
        <position position="332"/>
    </location>
    <ligand>
        <name>ATP</name>
        <dbReference type="ChEBI" id="CHEBI:30616"/>
    </ligand>
</feature>
<accession>B2IQ55</accession>
<comment type="function">
    <text evidence="1">Is required not only for elongation of protein synthesis but also for the initiation of all mRNA translation through initiator tRNA(fMet) aminoacylation.</text>
</comment>
<comment type="catalytic activity">
    <reaction evidence="1">
        <text>tRNA(Met) + L-methionine + ATP = L-methionyl-tRNA(Met) + AMP + diphosphate</text>
        <dbReference type="Rhea" id="RHEA:13481"/>
        <dbReference type="Rhea" id="RHEA-COMP:9667"/>
        <dbReference type="Rhea" id="RHEA-COMP:9698"/>
        <dbReference type="ChEBI" id="CHEBI:30616"/>
        <dbReference type="ChEBI" id="CHEBI:33019"/>
        <dbReference type="ChEBI" id="CHEBI:57844"/>
        <dbReference type="ChEBI" id="CHEBI:78442"/>
        <dbReference type="ChEBI" id="CHEBI:78530"/>
        <dbReference type="ChEBI" id="CHEBI:456215"/>
        <dbReference type="EC" id="6.1.1.10"/>
    </reaction>
</comment>
<comment type="cofactor">
    <cofactor evidence="1">
        <name>Zn(2+)</name>
        <dbReference type="ChEBI" id="CHEBI:29105"/>
    </cofactor>
    <text evidence="1">Binds 1 zinc ion per subunit.</text>
</comment>
<comment type="subunit">
    <text evidence="1">Monomer.</text>
</comment>
<comment type="subcellular location">
    <subcellularLocation>
        <location evidence="1">Cytoplasm</location>
    </subcellularLocation>
</comment>
<comment type="similarity">
    <text evidence="1">Belongs to the class-I aminoacyl-tRNA synthetase family. MetG type 1 subfamily.</text>
</comment>
<reference key="1">
    <citation type="journal article" date="2009" name="BMC Genomics">
        <title>Genome evolution driven by host adaptations results in a more virulent and antimicrobial-resistant Streptococcus pneumoniae serotype 14.</title>
        <authorList>
            <person name="Ding F."/>
            <person name="Tang P."/>
            <person name="Hsu M.-H."/>
            <person name="Cui P."/>
            <person name="Hu S."/>
            <person name="Yu J."/>
            <person name="Chiu C.-H."/>
        </authorList>
    </citation>
    <scope>NUCLEOTIDE SEQUENCE [LARGE SCALE GENOMIC DNA]</scope>
    <source>
        <strain>CGSP14</strain>
    </source>
</reference>
<evidence type="ECO:0000255" key="1">
    <source>
        <dbReference type="HAMAP-Rule" id="MF_00098"/>
    </source>
</evidence>
<organism>
    <name type="scientific">Streptococcus pneumoniae (strain CGSP14)</name>
    <dbReference type="NCBI Taxonomy" id="516950"/>
    <lineage>
        <taxon>Bacteria</taxon>
        <taxon>Bacillati</taxon>
        <taxon>Bacillota</taxon>
        <taxon>Bacilli</taxon>
        <taxon>Lactobacillales</taxon>
        <taxon>Streptococcaceae</taxon>
        <taxon>Streptococcus</taxon>
    </lineage>
</organism>
<gene>
    <name evidence="1" type="primary">metG</name>
    <name type="ordered locus">SPCG_1227</name>
</gene>
<proteinExistence type="inferred from homology"/>
<protein>
    <recommendedName>
        <fullName evidence="1">Methionine--tRNA ligase</fullName>
        <ecNumber evidence="1">6.1.1.10</ecNumber>
    </recommendedName>
    <alternativeName>
        <fullName evidence="1">Methionyl-tRNA synthetase</fullName>
        <shortName evidence="1">MetRS</shortName>
    </alternativeName>
</protein>